<dbReference type="EMBL" id="X06728">
    <property type="protein sequence ID" value="CAA29908.1"/>
    <property type="molecule type" value="Genomic_RNA"/>
</dbReference>
<dbReference type="EMBL" id="M18920">
    <property type="protein sequence ID" value="AAA69638.1"/>
    <property type="molecule type" value="Genomic_RNA"/>
</dbReference>
<dbReference type="PIR" id="S01089">
    <property type="entry name" value="VCWGWC"/>
</dbReference>
<dbReference type="RefSeq" id="NP_620719.1">
    <property type="nucleotide sequence ID" value="NC_003820.1"/>
</dbReference>
<dbReference type="SMR" id="P09502"/>
<dbReference type="GeneID" id="944396"/>
<dbReference type="KEGG" id="vg:944396"/>
<dbReference type="Proteomes" id="UP000007627">
    <property type="component" value="Segment"/>
</dbReference>
<dbReference type="GO" id="GO:0019029">
    <property type="term" value="C:helical viral capsid"/>
    <property type="evidence" value="ECO:0007669"/>
    <property type="project" value="UniProtKB-KW"/>
</dbReference>
<dbReference type="GO" id="GO:1990904">
    <property type="term" value="C:ribonucleoprotein complex"/>
    <property type="evidence" value="ECO:0007669"/>
    <property type="project" value="UniProtKB-KW"/>
</dbReference>
<dbReference type="GO" id="GO:0005198">
    <property type="term" value="F:structural molecule activity"/>
    <property type="evidence" value="ECO:0007669"/>
    <property type="project" value="InterPro"/>
</dbReference>
<dbReference type="InterPro" id="IPR000052">
    <property type="entry name" value="Pltvir_coat"/>
</dbReference>
<dbReference type="Pfam" id="PF00286">
    <property type="entry name" value="Flexi_CP"/>
    <property type="match status" value="1"/>
</dbReference>
<dbReference type="PRINTS" id="PR00232">
    <property type="entry name" value="POTXCARLCOAT"/>
</dbReference>
<dbReference type="PROSITE" id="PS00418">
    <property type="entry name" value="POTEX_CARLAVIRUS_COAT"/>
    <property type="match status" value="1"/>
</dbReference>
<sequence>MATTTATTPPSLTDIRALKYTSSTVSVASPAEIEAITKTWAETFKIPNDVLPLACWDLARAFADVGASSKSELTGDSAALAGVSRKQLAQAIKIHCTIRQFCMYFANIVWNIMLDTKTPPASWSKLGYKEESKFAGFDFFDGVNHPAALMPADGLIRGPSDAEILAHQTAKQVALHRDAKPTWHKRCQLC</sequence>
<organism>
    <name type="scientific">White clover mosaic virus (strain M)</name>
    <name type="common">WCMV</name>
    <dbReference type="NCBI Taxonomy" id="12189"/>
    <lineage>
        <taxon>Viruses</taxon>
        <taxon>Riboviria</taxon>
        <taxon>Orthornavirae</taxon>
        <taxon>Kitrinoviricota</taxon>
        <taxon>Alsuviricetes</taxon>
        <taxon>Tymovirales</taxon>
        <taxon>Alphaflexiviridae</taxon>
        <taxon>Potexvirus</taxon>
        <taxon>White clover mosaic virus</taxon>
    </lineage>
</organism>
<accession>P09502</accession>
<keyword id="KW-0167">Capsid protein</keyword>
<keyword id="KW-1139">Helical capsid protein</keyword>
<keyword id="KW-1185">Reference proteome</keyword>
<keyword id="KW-0687">Ribonucleoprotein</keyword>
<keyword id="KW-0946">Virion</keyword>
<name>CAPSD_WCMVM</name>
<comment type="function">
    <text>Required for genome encapsidation. Forms ribonucleoprotein complexes along with TGB1 helicase and viral RNA.</text>
</comment>
<comment type="subcellular location">
    <subcellularLocation>
        <location evidence="1">Virion</location>
    </subcellularLocation>
</comment>
<comment type="similarity">
    <text evidence="1">Belongs to the potexvirus capsid protein family.</text>
</comment>
<organismHost>
    <name type="scientific">Trifolium</name>
    <dbReference type="NCBI Taxonomy" id="3898"/>
</organismHost>
<feature type="chain" id="PRO_0000222632" description="Coat protein">
    <location>
        <begin position="1"/>
        <end position="190"/>
    </location>
</feature>
<evidence type="ECO:0000305" key="1"/>
<protein>
    <recommendedName>
        <fullName>Coat protein</fullName>
    </recommendedName>
    <alternativeName>
        <fullName>Capsid protein</fullName>
        <shortName>CP</shortName>
    </alternativeName>
</protein>
<proteinExistence type="inferred from homology"/>
<reference key="1">
    <citation type="journal article" date="1988" name="Nucleic Acids Res.">
        <title>The complete nucleotide sequence of the potexvirus white clover mosaic virus.</title>
        <authorList>
            <person name="Forster R.L.S."/>
            <person name="Bevan M.W."/>
            <person name="Harbison S.-A."/>
            <person name="Gardner R.C."/>
        </authorList>
    </citation>
    <scope>NUCLEOTIDE SEQUENCE [GENOMIC RNA]</scope>
</reference>
<reference key="2">
    <citation type="journal article" date="1988" name="Virology">
        <title>Organization and interviral homologies of the coat protein gene of white clover mosaic virus.</title>
        <authorList>
            <person name="Harbison S.-A."/>
            <person name="Forster R.L.S."/>
            <person name="Guilford P.J."/>
            <person name="Gardner R.C."/>
        </authorList>
    </citation>
    <scope>NUCLEOTIDE SEQUENCE [GENOMIC RNA]</scope>
</reference>
<reference key="3">
    <citation type="journal article" date="2005" name="Mol. Plant Microbe Interact.">
        <title>A new cell-to-cell transport model for Potexviruses.</title>
        <authorList>
            <person name="Verchot-Lubicz J."/>
        </authorList>
    </citation>
    <scope>REVIEW</scope>
</reference>